<reference key="1">
    <citation type="journal article" date="2004" name="Nat. Genet.">
        <title>Complete sequencing and characterization of 21,243 full-length human cDNAs.</title>
        <authorList>
            <person name="Ota T."/>
            <person name="Suzuki Y."/>
            <person name="Nishikawa T."/>
            <person name="Otsuki T."/>
            <person name="Sugiyama T."/>
            <person name="Irie R."/>
            <person name="Wakamatsu A."/>
            <person name="Hayashi K."/>
            <person name="Sato H."/>
            <person name="Nagai K."/>
            <person name="Kimura K."/>
            <person name="Makita H."/>
            <person name="Sekine M."/>
            <person name="Obayashi M."/>
            <person name="Nishi T."/>
            <person name="Shibahara T."/>
            <person name="Tanaka T."/>
            <person name="Ishii S."/>
            <person name="Yamamoto J."/>
            <person name="Saito K."/>
            <person name="Kawai Y."/>
            <person name="Isono Y."/>
            <person name="Nakamura Y."/>
            <person name="Nagahari K."/>
            <person name="Murakami K."/>
            <person name="Yasuda T."/>
            <person name="Iwayanagi T."/>
            <person name="Wagatsuma M."/>
            <person name="Shiratori A."/>
            <person name="Sudo H."/>
            <person name="Hosoiri T."/>
            <person name="Kaku Y."/>
            <person name="Kodaira H."/>
            <person name="Kondo H."/>
            <person name="Sugawara M."/>
            <person name="Takahashi M."/>
            <person name="Kanda K."/>
            <person name="Yokoi T."/>
            <person name="Furuya T."/>
            <person name="Kikkawa E."/>
            <person name="Omura Y."/>
            <person name="Abe K."/>
            <person name="Kamihara K."/>
            <person name="Katsuta N."/>
            <person name="Sato K."/>
            <person name="Tanikawa M."/>
            <person name="Yamazaki M."/>
            <person name="Ninomiya K."/>
            <person name="Ishibashi T."/>
            <person name="Yamashita H."/>
            <person name="Murakawa K."/>
            <person name="Fujimori K."/>
            <person name="Tanai H."/>
            <person name="Kimata M."/>
            <person name="Watanabe M."/>
            <person name="Hiraoka S."/>
            <person name="Chiba Y."/>
            <person name="Ishida S."/>
            <person name="Ono Y."/>
            <person name="Takiguchi S."/>
            <person name="Watanabe S."/>
            <person name="Yosida M."/>
            <person name="Hotuta T."/>
            <person name="Kusano J."/>
            <person name="Kanehori K."/>
            <person name="Takahashi-Fujii A."/>
            <person name="Hara H."/>
            <person name="Tanase T.-O."/>
            <person name="Nomura Y."/>
            <person name="Togiya S."/>
            <person name="Komai F."/>
            <person name="Hara R."/>
            <person name="Takeuchi K."/>
            <person name="Arita M."/>
            <person name="Imose N."/>
            <person name="Musashino K."/>
            <person name="Yuuki H."/>
            <person name="Oshima A."/>
            <person name="Sasaki N."/>
            <person name="Aotsuka S."/>
            <person name="Yoshikawa Y."/>
            <person name="Matsunawa H."/>
            <person name="Ichihara T."/>
            <person name="Shiohata N."/>
            <person name="Sano S."/>
            <person name="Moriya S."/>
            <person name="Momiyama H."/>
            <person name="Satoh N."/>
            <person name="Takami S."/>
            <person name="Terashima Y."/>
            <person name="Suzuki O."/>
            <person name="Nakagawa S."/>
            <person name="Senoh A."/>
            <person name="Mizoguchi H."/>
            <person name="Goto Y."/>
            <person name="Shimizu F."/>
            <person name="Wakebe H."/>
            <person name="Hishigaki H."/>
            <person name="Watanabe T."/>
            <person name="Sugiyama A."/>
            <person name="Takemoto M."/>
            <person name="Kawakami B."/>
            <person name="Yamazaki M."/>
            <person name="Watanabe K."/>
            <person name="Kumagai A."/>
            <person name="Itakura S."/>
            <person name="Fukuzumi Y."/>
            <person name="Fujimori Y."/>
            <person name="Komiyama M."/>
            <person name="Tashiro H."/>
            <person name="Tanigami A."/>
            <person name="Fujiwara T."/>
            <person name="Ono T."/>
            <person name="Yamada K."/>
            <person name="Fujii Y."/>
            <person name="Ozaki K."/>
            <person name="Hirao M."/>
            <person name="Ohmori Y."/>
            <person name="Kawabata A."/>
            <person name="Hikiji T."/>
            <person name="Kobatake N."/>
            <person name="Inagaki H."/>
            <person name="Ikema Y."/>
            <person name="Okamoto S."/>
            <person name="Okitani R."/>
            <person name="Kawakami T."/>
            <person name="Noguchi S."/>
            <person name="Itoh T."/>
            <person name="Shigeta K."/>
            <person name="Senba T."/>
            <person name="Matsumura K."/>
            <person name="Nakajima Y."/>
            <person name="Mizuno T."/>
            <person name="Morinaga M."/>
            <person name="Sasaki M."/>
            <person name="Togashi T."/>
            <person name="Oyama M."/>
            <person name="Hata H."/>
            <person name="Watanabe M."/>
            <person name="Komatsu T."/>
            <person name="Mizushima-Sugano J."/>
            <person name="Satoh T."/>
            <person name="Shirai Y."/>
            <person name="Takahashi Y."/>
            <person name="Nakagawa K."/>
            <person name="Okumura K."/>
            <person name="Nagase T."/>
            <person name="Nomura N."/>
            <person name="Kikuchi H."/>
            <person name="Masuho Y."/>
            <person name="Yamashita R."/>
            <person name="Nakai K."/>
            <person name="Yada T."/>
            <person name="Nakamura Y."/>
            <person name="Ohara O."/>
            <person name="Isogai T."/>
            <person name="Sugano S."/>
        </authorList>
    </citation>
    <scope>NUCLEOTIDE SEQUENCE [LARGE SCALE MRNA] (ISOFORMS 1 AND 2)</scope>
    <source>
        <tissue>Placenta</tissue>
        <tissue>Synovium</tissue>
    </source>
</reference>
<reference key="2">
    <citation type="journal article" date="2006" name="Nature">
        <title>The DNA sequence and biological annotation of human chromosome 1.</title>
        <authorList>
            <person name="Gregory S.G."/>
            <person name="Barlow K.F."/>
            <person name="McLay K.E."/>
            <person name="Kaul R."/>
            <person name="Swarbreck D."/>
            <person name="Dunham A."/>
            <person name="Scott C.E."/>
            <person name="Howe K.L."/>
            <person name="Woodfine K."/>
            <person name="Spencer C.C.A."/>
            <person name="Jones M.C."/>
            <person name="Gillson C."/>
            <person name="Searle S."/>
            <person name="Zhou Y."/>
            <person name="Kokocinski F."/>
            <person name="McDonald L."/>
            <person name="Evans R."/>
            <person name="Phillips K."/>
            <person name="Atkinson A."/>
            <person name="Cooper R."/>
            <person name="Jones C."/>
            <person name="Hall R.E."/>
            <person name="Andrews T.D."/>
            <person name="Lloyd C."/>
            <person name="Ainscough R."/>
            <person name="Almeida J.P."/>
            <person name="Ambrose K.D."/>
            <person name="Anderson F."/>
            <person name="Andrew R.W."/>
            <person name="Ashwell R.I.S."/>
            <person name="Aubin K."/>
            <person name="Babbage A.K."/>
            <person name="Bagguley C.L."/>
            <person name="Bailey J."/>
            <person name="Beasley H."/>
            <person name="Bethel G."/>
            <person name="Bird C.P."/>
            <person name="Bray-Allen S."/>
            <person name="Brown J.Y."/>
            <person name="Brown A.J."/>
            <person name="Buckley D."/>
            <person name="Burton J."/>
            <person name="Bye J."/>
            <person name="Carder C."/>
            <person name="Chapman J.C."/>
            <person name="Clark S.Y."/>
            <person name="Clarke G."/>
            <person name="Clee C."/>
            <person name="Cobley V."/>
            <person name="Collier R.E."/>
            <person name="Corby N."/>
            <person name="Coville G.J."/>
            <person name="Davies J."/>
            <person name="Deadman R."/>
            <person name="Dunn M."/>
            <person name="Earthrowl M."/>
            <person name="Ellington A.G."/>
            <person name="Errington H."/>
            <person name="Frankish A."/>
            <person name="Frankland J."/>
            <person name="French L."/>
            <person name="Garner P."/>
            <person name="Garnett J."/>
            <person name="Gay L."/>
            <person name="Ghori M.R.J."/>
            <person name="Gibson R."/>
            <person name="Gilby L.M."/>
            <person name="Gillett W."/>
            <person name="Glithero R.J."/>
            <person name="Grafham D.V."/>
            <person name="Griffiths C."/>
            <person name="Griffiths-Jones S."/>
            <person name="Grocock R."/>
            <person name="Hammond S."/>
            <person name="Harrison E.S.I."/>
            <person name="Hart E."/>
            <person name="Haugen E."/>
            <person name="Heath P.D."/>
            <person name="Holmes S."/>
            <person name="Holt K."/>
            <person name="Howden P.J."/>
            <person name="Hunt A.R."/>
            <person name="Hunt S.E."/>
            <person name="Hunter G."/>
            <person name="Isherwood J."/>
            <person name="James R."/>
            <person name="Johnson C."/>
            <person name="Johnson D."/>
            <person name="Joy A."/>
            <person name="Kay M."/>
            <person name="Kershaw J.K."/>
            <person name="Kibukawa M."/>
            <person name="Kimberley A.M."/>
            <person name="King A."/>
            <person name="Knights A.J."/>
            <person name="Lad H."/>
            <person name="Laird G."/>
            <person name="Lawlor S."/>
            <person name="Leongamornlert D.A."/>
            <person name="Lloyd D.M."/>
            <person name="Loveland J."/>
            <person name="Lovell J."/>
            <person name="Lush M.J."/>
            <person name="Lyne R."/>
            <person name="Martin S."/>
            <person name="Mashreghi-Mohammadi M."/>
            <person name="Matthews L."/>
            <person name="Matthews N.S.W."/>
            <person name="McLaren S."/>
            <person name="Milne S."/>
            <person name="Mistry S."/>
            <person name="Moore M.J.F."/>
            <person name="Nickerson T."/>
            <person name="O'Dell C.N."/>
            <person name="Oliver K."/>
            <person name="Palmeiri A."/>
            <person name="Palmer S.A."/>
            <person name="Parker A."/>
            <person name="Patel D."/>
            <person name="Pearce A.V."/>
            <person name="Peck A.I."/>
            <person name="Pelan S."/>
            <person name="Phelps K."/>
            <person name="Phillimore B.J."/>
            <person name="Plumb R."/>
            <person name="Rajan J."/>
            <person name="Raymond C."/>
            <person name="Rouse G."/>
            <person name="Saenphimmachak C."/>
            <person name="Sehra H.K."/>
            <person name="Sheridan E."/>
            <person name="Shownkeen R."/>
            <person name="Sims S."/>
            <person name="Skuce C.D."/>
            <person name="Smith M."/>
            <person name="Steward C."/>
            <person name="Subramanian S."/>
            <person name="Sycamore N."/>
            <person name="Tracey A."/>
            <person name="Tromans A."/>
            <person name="Van Helmond Z."/>
            <person name="Wall M."/>
            <person name="Wallis J.M."/>
            <person name="White S."/>
            <person name="Whitehead S.L."/>
            <person name="Wilkinson J.E."/>
            <person name="Willey D.L."/>
            <person name="Williams H."/>
            <person name="Wilming L."/>
            <person name="Wray P.W."/>
            <person name="Wu Z."/>
            <person name="Coulson A."/>
            <person name="Vaudin M."/>
            <person name="Sulston J.E."/>
            <person name="Durbin R.M."/>
            <person name="Hubbard T."/>
            <person name="Wooster R."/>
            <person name="Dunham I."/>
            <person name="Carter N.P."/>
            <person name="McVean G."/>
            <person name="Ross M.T."/>
            <person name="Harrow J."/>
            <person name="Olson M.V."/>
            <person name="Beck S."/>
            <person name="Rogers J."/>
            <person name="Bentley D.R."/>
        </authorList>
    </citation>
    <scope>NUCLEOTIDE SEQUENCE [LARGE SCALE GENOMIC DNA]</scope>
</reference>
<reference key="3">
    <citation type="submission" date="2005-09" db="EMBL/GenBank/DDBJ databases">
        <authorList>
            <person name="Mural R.J."/>
            <person name="Istrail S."/>
            <person name="Sutton G.G."/>
            <person name="Florea L."/>
            <person name="Halpern A.L."/>
            <person name="Mobarry C.M."/>
            <person name="Lippert R."/>
            <person name="Walenz B."/>
            <person name="Shatkay H."/>
            <person name="Dew I."/>
            <person name="Miller J.R."/>
            <person name="Flanigan M.J."/>
            <person name="Edwards N.J."/>
            <person name="Bolanos R."/>
            <person name="Fasulo D."/>
            <person name="Halldorsson B.V."/>
            <person name="Hannenhalli S."/>
            <person name="Turner R."/>
            <person name="Yooseph S."/>
            <person name="Lu F."/>
            <person name="Nusskern D.R."/>
            <person name="Shue B.C."/>
            <person name="Zheng X.H."/>
            <person name="Zhong F."/>
            <person name="Delcher A.L."/>
            <person name="Huson D.H."/>
            <person name="Kravitz S.A."/>
            <person name="Mouchard L."/>
            <person name="Reinert K."/>
            <person name="Remington K.A."/>
            <person name="Clark A.G."/>
            <person name="Waterman M.S."/>
            <person name="Eichler E.E."/>
            <person name="Adams M.D."/>
            <person name="Hunkapiller M.W."/>
            <person name="Myers E.W."/>
            <person name="Venter J.C."/>
        </authorList>
    </citation>
    <scope>NUCLEOTIDE SEQUENCE [LARGE SCALE GENOMIC DNA]</scope>
</reference>
<reference key="4">
    <citation type="journal article" date="2004" name="Genome Res.">
        <title>The status, quality, and expansion of the NIH full-length cDNA project: the Mammalian Gene Collection (MGC).</title>
        <authorList>
            <consortium name="The MGC Project Team"/>
        </authorList>
    </citation>
    <scope>NUCLEOTIDE SEQUENCE [LARGE SCALE MRNA] (ISOFORM 1)</scope>
    <source>
        <tissue>Eye</tissue>
    </source>
</reference>
<reference key="5">
    <citation type="journal article" date="2013" name="Biochem. Biophys. Res. Commun.">
        <title>Characterization of TRIM62 as a RING finger E3 ubiquitin ligase and its subcellular localization.</title>
        <authorList>
            <person name="Huang F."/>
            <person name="Xiao H."/>
            <person name="Sun B.L."/>
            <person name="Yang R.G."/>
        </authorList>
    </citation>
    <scope>FUNCTION</scope>
    <scope>CATALYTIC ACTIVITY</scope>
    <scope>PATHWAY</scope>
    <scope>SUBCELLULAR LOCATION</scope>
    <scope>POLYUBIQUITINATION</scope>
    <scope>INTERACTION WITH UBE2D2</scope>
</reference>
<reference key="6">
    <citation type="journal article" date="2015" name="Immunity">
        <title>Ubiquitin ligase TRIM62 regulates CARD9-mediated anti-fungal immunity and intestinal inflammation.</title>
        <authorList>
            <person name="Cao Z."/>
            <person name="Conway K.L."/>
            <person name="Heath R.J."/>
            <person name="Rush J.S."/>
            <person name="Leshchiner E.S."/>
            <person name="Ramirez-Ortiz Z.G."/>
            <person name="Nedelsky N.B."/>
            <person name="Huang H."/>
            <person name="Ng A."/>
            <person name="Gardet A."/>
            <person name="Cheng S.C."/>
            <person name="Shamji A.F."/>
            <person name="Rioux J.D."/>
            <person name="Wijmenga C."/>
            <person name="Netea M.G."/>
            <person name="Means T.K."/>
            <person name="Daly M.J."/>
            <person name="Xavier R.J."/>
        </authorList>
    </citation>
    <scope>FUNCTION</scope>
    <scope>CATALYTIC ACTIVITY</scope>
    <scope>PATHWAY</scope>
    <scope>SUBCELLULAR LOCATION</scope>
    <scope>MUTAGENESIS OF 11-CYS--CYS-14</scope>
</reference>
<evidence type="ECO:0000255" key="1"/>
<evidence type="ECO:0000255" key="2">
    <source>
        <dbReference type="PROSITE-ProRule" id="PRU00024"/>
    </source>
</evidence>
<evidence type="ECO:0000255" key="3">
    <source>
        <dbReference type="PROSITE-ProRule" id="PRU00175"/>
    </source>
</evidence>
<evidence type="ECO:0000255" key="4">
    <source>
        <dbReference type="PROSITE-ProRule" id="PRU00548"/>
    </source>
</evidence>
<evidence type="ECO:0000269" key="5">
    <source>
    </source>
</evidence>
<evidence type="ECO:0000269" key="6">
    <source>
    </source>
</evidence>
<evidence type="ECO:0000303" key="7">
    <source>
    </source>
</evidence>
<evidence type="ECO:0000303" key="8">
    <source>
    </source>
</evidence>
<evidence type="ECO:0000305" key="9"/>
<evidence type="ECO:0000312" key="10">
    <source>
        <dbReference type="HGNC" id="HGNC:25574"/>
    </source>
</evidence>
<feature type="chain" id="PRO_0000249574" description="E3 ubiquitin-protein ligase TRIM62">
    <location>
        <begin position="1"/>
        <end position="475"/>
    </location>
</feature>
<feature type="domain" description="B30.2/SPRY" evidence="4">
    <location>
        <begin position="277"/>
        <end position="475"/>
    </location>
</feature>
<feature type="zinc finger region" description="RING-type" evidence="3">
    <location>
        <begin position="11"/>
        <end position="54"/>
    </location>
</feature>
<feature type="zinc finger region" description="B box-type" evidence="2">
    <location>
        <begin position="88"/>
        <end position="128"/>
    </location>
</feature>
<feature type="coiled-coil region" evidence="1">
    <location>
        <begin position="127"/>
        <end position="241"/>
    </location>
</feature>
<feature type="binding site" evidence="2">
    <location>
        <position position="93"/>
    </location>
    <ligand>
        <name>Zn(2+)</name>
        <dbReference type="ChEBI" id="CHEBI:29105"/>
    </ligand>
</feature>
<feature type="binding site" evidence="2">
    <location>
        <position position="96"/>
    </location>
    <ligand>
        <name>Zn(2+)</name>
        <dbReference type="ChEBI" id="CHEBI:29105"/>
    </ligand>
</feature>
<feature type="binding site" evidence="2">
    <location>
        <position position="114"/>
    </location>
    <ligand>
        <name>Zn(2+)</name>
        <dbReference type="ChEBI" id="CHEBI:29105"/>
    </ligand>
</feature>
<feature type="binding site" evidence="2">
    <location>
        <position position="120"/>
    </location>
    <ligand>
        <name>Zn(2+)</name>
        <dbReference type="ChEBI" id="CHEBI:29105"/>
    </ligand>
</feature>
<feature type="splice variant" id="VSP_055441" description="In isoform 2." evidence="7">
    <original>MACSLKDELLCSICL</original>
    <variation>MPEKTAVDQPWTQAL</variation>
    <location>
        <begin position="1"/>
        <end position="15"/>
    </location>
</feature>
<feature type="splice variant" id="VSP_055442" description="In isoform 2." evidence="7">
    <location>
        <begin position="16"/>
        <end position="136"/>
    </location>
</feature>
<feature type="mutagenesis site" description="Abolished E3 ubiquitin ligase activity." evidence="6">
    <original>CSIC</original>
    <variation>ASIA</variation>
    <location>
        <begin position="11"/>
        <end position="14"/>
    </location>
</feature>
<feature type="sequence conflict" description="In Ref. 1; BAA91792." evidence="9" ref="1">
    <original>F</original>
    <variation>L</variation>
    <location>
        <position position="102"/>
    </location>
</feature>
<feature type="sequence conflict" description="In Ref. 1; BAA91792." evidence="9" ref="1">
    <original>R</original>
    <variation>L</variation>
    <location>
        <position position="474"/>
    </location>
</feature>
<gene>
    <name evidence="8 10" type="primary">TRIM62</name>
</gene>
<protein>
    <recommendedName>
        <fullName evidence="9">E3 ubiquitin-protein ligase TRIM62</fullName>
        <ecNumber evidence="5 6">2.3.2.27</ecNumber>
    </recommendedName>
    <alternativeName>
        <fullName evidence="8">Tripartite motif-containing protein 62</fullName>
    </alternativeName>
</protein>
<accession>Q9BVG3</accession>
<accession>B3KVH5</accession>
<accession>B4DTE4</accession>
<accession>D3DPR1</accession>
<accession>Q9NVG0</accession>
<sequence length="475" mass="54268">MACSLKDELLCSICLSIYQDPVSLGCEHYFCRRCITEHWVRQEAQGARDCPECRRTFAEPALAPSLKLANIVERYSSFPLDAILNARRAARPCQAHDKVKLFCLTDRALLCFFCDEPALHEQHQVTGIDDAFDELQRELKDQLQALQDSEREHTEALQLLKRQLAETKSSTKSLRTTIGEAFERLHRLLRERQKAMLEELEADTARTLTDIEQKVQRYSQQLRKVQEGAQILQERLAETDRHTFLAGVASLSERLKGKIHETNLTYEDFPTSKYTGPLQYTIWKSLFQDIHPVPAALTLDPGTAHQRLILSDDCTIVAYGNLHPQPLQDSPKRFDVEVSVLGSEAFSSGVHYWEVVVAEKTQWVIGLAHEAASRKGSIQIQPSRGFYCIVMHDGNQYSACTEPWTRLNVRDKLDKVGVFLDYDQGLLIFYNADDMSWLYTFREKFPGKLCSYFSPGQSHANGKNVQPLRINTVRI</sequence>
<proteinExistence type="evidence at protein level"/>
<dbReference type="EC" id="2.3.2.27" evidence="5 6"/>
<dbReference type="EMBL" id="AK001621">
    <property type="protein sequence ID" value="BAA91792.1"/>
    <property type="molecule type" value="mRNA"/>
</dbReference>
<dbReference type="EMBL" id="AK122896">
    <property type="protein sequence ID" value="BAG53787.1"/>
    <property type="molecule type" value="mRNA"/>
</dbReference>
<dbReference type="EMBL" id="AK300177">
    <property type="protein sequence ID" value="BAG61956.1"/>
    <property type="molecule type" value="mRNA"/>
</dbReference>
<dbReference type="EMBL" id="AL662907">
    <property type="status" value="NOT_ANNOTATED_CDS"/>
    <property type="molecule type" value="Genomic_DNA"/>
</dbReference>
<dbReference type="EMBL" id="CH471059">
    <property type="protein sequence ID" value="EAX07466.1"/>
    <property type="molecule type" value="Genomic_DNA"/>
</dbReference>
<dbReference type="EMBL" id="CH471059">
    <property type="protein sequence ID" value="EAX07467.1"/>
    <property type="molecule type" value="Genomic_DNA"/>
</dbReference>
<dbReference type="EMBL" id="BC001222">
    <property type="protein sequence ID" value="AAH01222.1"/>
    <property type="molecule type" value="mRNA"/>
</dbReference>
<dbReference type="EMBL" id="BC007999">
    <property type="protein sequence ID" value="AAH07999.1"/>
    <property type="molecule type" value="mRNA"/>
</dbReference>
<dbReference type="EMBL" id="BC011689">
    <property type="protein sequence ID" value="AAH11689.1"/>
    <property type="molecule type" value="mRNA"/>
</dbReference>
<dbReference type="EMBL" id="BC012152">
    <property type="protein sequence ID" value="AAH12152.1"/>
    <property type="molecule type" value="mRNA"/>
</dbReference>
<dbReference type="CCDS" id="CCDS376.1">
    <molecule id="Q9BVG3-1"/>
</dbReference>
<dbReference type="CCDS" id="CCDS81297.1">
    <molecule id="Q9BVG3-2"/>
</dbReference>
<dbReference type="RefSeq" id="NP_001317412.1">
    <molecule id="Q9BVG3-2"/>
    <property type="nucleotide sequence ID" value="NM_001330483.2"/>
</dbReference>
<dbReference type="RefSeq" id="NP_060677.2">
    <molecule id="Q9BVG3-1"/>
    <property type="nucleotide sequence ID" value="NM_018207.3"/>
</dbReference>
<dbReference type="SMR" id="Q9BVG3"/>
<dbReference type="BioGRID" id="120518">
    <property type="interactions" value="33"/>
</dbReference>
<dbReference type="FunCoup" id="Q9BVG3">
    <property type="interactions" value="816"/>
</dbReference>
<dbReference type="IntAct" id="Q9BVG3">
    <property type="interactions" value="27"/>
</dbReference>
<dbReference type="MINT" id="Q9BVG3"/>
<dbReference type="STRING" id="9606.ENSP00000291416"/>
<dbReference type="iPTMnet" id="Q9BVG3"/>
<dbReference type="PhosphoSitePlus" id="Q9BVG3"/>
<dbReference type="BioMuta" id="TRIM62"/>
<dbReference type="DMDM" id="74752380"/>
<dbReference type="jPOST" id="Q9BVG3"/>
<dbReference type="MassIVE" id="Q9BVG3"/>
<dbReference type="PaxDb" id="9606-ENSP00000291416"/>
<dbReference type="PeptideAtlas" id="Q9BVG3"/>
<dbReference type="ProteomicsDB" id="5103"/>
<dbReference type="ProteomicsDB" id="79199">
    <molecule id="Q9BVG3-1"/>
</dbReference>
<dbReference type="Pumba" id="Q9BVG3"/>
<dbReference type="Antibodypedia" id="17083">
    <property type="antibodies" value="171 antibodies from 25 providers"/>
</dbReference>
<dbReference type="DNASU" id="55223"/>
<dbReference type="Ensembl" id="ENST00000291416.10">
    <molecule id="Q9BVG3-1"/>
    <property type="protein sequence ID" value="ENSP00000291416.5"/>
    <property type="gene ID" value="ENSG00000116525.14"/>
</dbReference>
<dbReference type="Ensembl" id="ENST00000543586.1">
    <molecule id="Q9BVG3-2"/>
    <property type="protein sequence ID" value="ENSP00000441173.1"/>
    <property type="gene ID" value="ENSG00000116525.14"/>
</dbReference>
<dbReference type="GeneID" id="55223"/>
<dbReference type="KEGG" id="hsa:55223"/>
<dbReference type="MANE-Select" id="ENST00000291416.10">
    <property type="protein sequence ID" value="ENSP00000291416.5"/>
    <property type="RefSeq nucleotide sequence ID" value="NM_018207.3"/>
    <property type="RefSeq protein sequence ID" value="NP_060677.2"/>
</dbReference>
<dbReference type="UCSC" id="uc001bxb.4">
    <molecule id="Q9BVG3-1"/>
    <property type="organism name" value="human"/>
</dbReference>
<dbReference type="AGR" id="HGNC:25574"/>
<dbReference type="CTD" id="55223"/>
<dbReference type="DisGeNET" id="55223"/>
<dbReference type="GeneCards" id="TRIM62"/>
<dbReference type="HGNC" id="HGNC:25574">
    <property type="gene designation" value="TRIM62"/>
</dbReference>
<dbReference type="HPA" id="ENSG00000116525">
    <property type="expression patterns" value="Low tissue specificity"/>
</dbReference>
<dbReference type="neXtProt" id="NX_Q9BVG3"/>
<dbReference type="OpenTargets" id="ENSG00000116525"/>
<dbReference type="PharmGKB" id="PA134890243"/>
<dbReference type="VEuPathDB" id="HostDB:ENSG00000116525"/>
<dbReference type="eggNOG" id="KOG2177">
    <property type="taxonomic scope" value="Eukaryota"/>
</dbReference>
<dbReference type="GeneTree" id="ENSGT00940000158433"/>
<dbReference type="HOGENOM" id="CLU_013137_0_3_1"/>
<dbReference type="InParanoid" id="Q9BVG3"/>
<dbReference type="OMA" id="TEHWNRQ"/>
<dbReference type="OrthoDB" id="6270329at2759"/>
<dbReference type="PAN-GO" id="Q9BVG3">
    <property type="GO annotations" value="6 GO annotations based on evolutionary models"/>
</dbReference>
<dbReference type="PhylomeDB" id="Q9BVG3"/>
<dbReference type="TreeFam" id="TF342569"/>
<dbReference type="BRENDA" id="2.3.2.27">
    <property type="organism ID" value="2681"/>
</dbReference>
<dbReference type="PathwayCommons" id="Q9BVG3"/>
<dbReference type="Reactome" id="R-HSA-877300">
    <property type="pathway name" value="Interferon gamma signaling"/>
</dbReference>
<dbReference type="SignaLink" id="Q9BVG3"/>
<dbReference type="SIGNOR" id="Q9BVG3"/>
<dbReference type="UniPathway" id="UPA00143"/>
<dbReference type="BioGRID-ORCS" id="55223">
    <property type="hits" value="16 hits in 1194 CRISPR screens"/>
</dbReference>
<dbReference type="ChiTaRS" id="TRIM62">
    <property type="organism name" value="human"/>
</dbReference>
<dbReference type="GenomeRNAi" id="55223"/>
<dbReference type="Pharos" id="Q9BVG3">
    <property type="development level" value="Tbio"/>
</dbReference>
<dbReference type="PRO" id="PR:Q9BVG3"/>
<dbReference type="Proteomes" id="UP000005640">
    <property type="component" value="Chromosome 1"/>
</dbReference>
<dbReference type="RNAct" id="Q9BVG3">
    <property type="molecule type" value="protein"/>
</dbReference>
<dbReference type="Bgee" id="ENSG00000116525">
    <property type="expression patterns" value="Expressed in oocyte and 186 other cell types or tissues"/>
</dbReference>
<dbReference type="GO" id="GO:0005737">
    <property type="term" value="C:cytoplasm"/>
    <property type="evidence" value="ECO:0000314"/>
    <property type="project" value="UniProtKB"/>
</dbReference>
<dbReference type="GO" id="GO:0005829">
    <property type="term" value="C:cytosol"/>
    <property type="evidence" value="ECO:0000304"/>
    <property type="project" value="Reactome"/>
</dbReference>
<dbReference type="GO" id="GO:0042802">
    <property type="term" value="F:identical protein binding"/>
    <property type="evidence" value="ECO:0000353"/>
    <property type="project" value="IntAct"/>
</dbReference>
<dbReference type="GO" id="GO:0003713">
    <property type="term" value="F:transcription coactivator activity"/>
    <property type="evidence" value="ECO:0000314"/>
    <property type="project" value="ARUK-UCL"/>
</dbReference>
<dbReference type="GO" id="GO:0061630">
    <property type="term" value="F:ubiquitin protein ligase activity"/>
    <property type="evidence" value="ECO:0000314"/>
    <property type="project" value="UniProt"/>
</dbReference>
<dbReference type="GO" id="GO:0004842">
    <property type="term" value="F:ubiquitin-protein transferase activity"/>
    <property type="evidence" value="ECO:0000314"/>
    <property type="project" value="UniProtKB"/>
</dbReference>
<dbReference type="GO" id="GO:0008270">
    <property type="term" value="F:zinc ion binding"/>
    <property type="evidence" value="ECO:0007669"/>
    <property type="project" value="UniProtKB-KW"/>
</dbReference>
<dbReference type="GO" id="GO:0045087">
    <property type="term" value="P:innate immune response"/>
    <property type="evidence" value="ECO:0000315"/>
    <property type="project" value="UniProtKB"/>
</dbReference>
<dbReference type="GO" id="GO:0010719">
    <property type="term" value="P:negative regulation of epithelial to mesenchymal transition"/>
    <property type="evidence" value="ECO:0007669"/>
    <property type="project" value="Ensembl"/>
</dbReference>
<dbReference type="GO" id="GO:0032897">
    <property type="term" value="P:negative regulation of viral transcription"/>
    <property type="evidence" value="ECO:0000314"/>
    <property type="project" value="UniProtKB"/>
</dbReference>
<dbReference type="GO" id="GO:1905036">
    <property type="term" value="P:positive regulation of antifungal innate immune response"/>
    <property type="evidence" value="ECO:0000314"/>
    <property type="project" value="UniProtKB"/>
</dbReference>
<dbReference type="GO" id="GO:0043123">
    <property type="term" value="P:positive regulation of canonical NF-kappaB signal transduction"/>
    <property type="evidence" value="ECO:0000314"/>
    <property type="project" value="UniProtKB"/>
</dbReference>
<dbReference type="GO" id="GO:0051091">
    <property type="term" value="P:positive regulation of DNA-binding transcription factor activity"/>
    <property type="evidence" value="ECO:0000315"/>
    <property type="project" value="UniProtKB"/>
</dbReference>
<dbReference type="GO" id="GO:0051092">
    <property type="term" value="P:positive regulation of NF-kappaB transcription factor activity"/>
    <property type="evidence" value="ECO:0000315"/>
    <property type="project" value="UniProtKB"/>
</dbReference>
<dbReference type="GO" id="GO:0044314">
    <property type="term" value="P:protein K27-linked ubiquitination"/>
    <property type="evidence" value="ECO:0000314"/>
    <property type="project" value="UniProtKB"/>
</dbReference>
<dbReference type="GO" id="GO:0046596">
    <property type="term" value="P:regulation of viral entry into host cell"/>
    <property type="evidence" value="ECO:0000314"/>
    <property type="project" value="UniProtKB"/>
</dbReference>
<dbReference type="GO" id="GO:0019076">
    <property type="term" value="P:viral release from host cell"/>
    <property type="evidence" value="ECO:0000315"/>
    <property type="project" value="UniProtKB"/>
</dbReference>
<dbReference type="CDD" id="cd19792">
    <property type="entry name" value="Bbox2_TRIM62_C-IV"/>
    <property type="match status" value="1"/>
</dbReference>
<dbReference type="CDD" id="cd16608">
    <property type="entry name" value="RING-HC_TRIM62_C-IV"/>
    <property type="match status" value="1"/>
</dbReference>
<dbReference type="CDD" id="cd13744">
    <property type="entry name" value="SPRY_PRY_TRIM62"/>
    <property type="match status" value="1"/>
</dbReference>
<dbReference type="FunFam" id="2.60.120.920:FF:000041">
    <property type="entry name" value="E3 ubiquitin-protein ligase TRIM62"/>
    <property type="match status" value="1"/>
</dbReference>
<dbReference type="FunFam" id="3.30.160.60:FF:001508">
    <property type="entry name" value="E3 ubiquitin-protein ligase TRIM62"/>
    <property type="match status" value="1"/>
</dbReference>
<dbReference type="FunFam" id="3.30.40.10:FF:000389">
    <property type="entry name" value="E3 ubiquitin-protein ligase TRIM62"/>
    <property type="match status" value="1"/>
</dbReference>
<dbReference type="Gene3D" id="2.60.120.920">
    <property type="match status" value="1"/>
</dbReference>
<dbReference type="Gene3D" id="3.30.160.60">
    <property type="entry name" value="Classic Zinc Finger"/>
    <property type="match status" value="1"/>
</dbReference>
<dbReference type="Gene3D" id="3.30.40.10">
    <property type="entry name" value="Zinc/RING finger domain, C3HC4 (zinc finger)"/>
    <property type="match status" value="1"/>
</dbReference>
<dbReference type="InterPro" id="IPR001870">
    <property type="entry name" value="B30.2/SPRY"/>
</dbReference>
<dbReference type="InterPro" id="IPR043136">
    <property type="entry name" value="B30.2/SPRY_sf"/>
</dbReference>
<dbReference type="InterPro" id="IPR003879">
    <property type="entry name" value="Butyrophylin_SPRY"/>
</dbReference>
<dbReference type="InterPro" id="IPR013320">
    <property type="entry name" value="ConA-like_dom_sf"/>
</dbReference>
<dbReference type="InterPro" id="IPR006574">
    <property type="entry name" value="PRY"/>
</dbReference>
<dbReference type="InterPro" id="IPR035830">
    <property type="entry name" value="PRY/SPRY_TRIM62"/>
</dbReference>
<dbReference type="InterPro" id="IPR003877">
    <property type="entry name" value="SPRY_dom"/>
</dbReference>
<dbReference type="InterPro" id="IPR050143">
    <property type="entry name" value="TRIM/RBCC"/>
</dbReference>
<dbReference type="InterPro" id="IPR000315">
    <property type="entry name" value="Znf_B-box"/>
</dbReference>
<dbReference type="InterPro" id="IPR001841">
    <property type="entry name" value="Znf_RING"/>
</dbReference>
<dbReference type="InterPro" id="IPR013083">
    <property type="entry name" value="Znf_RING/FYVE/PHD"/>
</dbReference>
<dbReference type="InterPro" id="IPR017907">
    <property type="entry name" value="Znf_RING_CS"/>
</dbReference>
<dbReference type="PANTHER" id="PTHR24103">
    <property type="entry name" value="E3 UBIQUITIN-PROTEIN LIGASE TRIM"/>
    <property type="match status" value="1"/>
</dbReference>
<dbReference type="Pfam" id="PF13765">
    <property type="entry name" value="PRY"/>
    <property type="match status" value="1"/>
</dbReference>
<dbReference type="Pfam" id="PF00622">
    <property type="entry name" value="SPRY"/>
    <property type="match status" value="1"/>
</dbReference>
<dbReference type="Pfam" id="PF00643">
    <property type="entry name" value="zf-B_box"/>
    <property type="match status" value="1"/>
</dbReference>
<dbReference type="Pfam" id="PF15227">
    <property type="entry name" value="zf-C3HC4_4"/>
    <property type="match status" value="1"/>
</dbReference>
<dbReference type="PRINTS" id="PR01407">
    <property type="entry name" value="BUTYPHLNCDUF"/>
</dbReference>
<dbReference type="SMART" id="SM00589">
    <property type="entry name" value="PRY"/>
    <property type="match status" value="1"/>
</dbReference>
<dbReference type="SMART" id="SM00184">
    <property type="entry name" value="RING"/>
    <property type="match status" value="1"/>
</dbReference>
<dbReference type="SMART" id="SM00449">
    <property type="entry name" value="SPRY"/>
    <property type="match status" value="1"/>
</dbReference>
<dbReference type="SUPFAM" id="SSF57845">
    <property type="entry name" value="B-box zinc-binding domain"/>
    <property type="match status" value="1"/>
</dbReference>
<dbReference type="SUPFAM" id="SSF49899">
    <property type="entry name" value="Concanavalin A-like lectins/glucanases"/>
    <property type="match status" value="1"/>
</dbReference>
<dbReference type="SUPFAM" id="SSF57850">
    <property type="entry name" value="RING/U-box"/>
    <property type="match status" value="1"/>
</dbReference>
<dbReference type="PROSITE" id="PS50188">
    <property type="entry name" value="B302_SPRY"/>
    <property type="match status" value="1"/>
</dbReference>
<dbReference type="PROSITE" id="PS50119">
    <property type="entry name" value="ZF_BBOX"/>
    <property type="match status" value="1"/>
</dbReference>
<dbReference type="PROSITE" id="PS00518">
    <property type="entry name" value="ZF_RING_1"/>
    <property type="match status" value="1"/>
</dbReference>
<dbReference type="PROSITE" id="PS50089">
    <property type="entry name" value="ZF_RING_2"/>
    <property type="match status" value="1"/>
</dbReference>
<organism>
    <name type="scientific">Homo sapiens</name>
    <name type="common">Human</name>
    <dbReference type="NCBI Taxonomy" id="9606"/>
    <lineage>
        <taxon>Eukaryota</taxon>
        <taxon>Metazoa</taxon>
        <taxon>Chordata</taxon>
        <taxon>Craniata</taxon>
        <taxon>Vertebrata</taxon>
        <taxon>Euteleostomi</taxon>
        <taxon>Mammalia</taxon>
        <taxon>Eutheria</taxon>
        <taxon>Euarchontoglires</taxon>
        <taxon>Primates</taxon>
        <taxon>Haplorrhini</taxon>
        <taxon>Catarrhini</taxon>
        <taxon>Hominidae</taxon>
        <taxon>Homo</taxon>
    </lineage>
</organism>
<comment type="function">
    <text evidence="5 6">E3 ubiquitin ligase that plays a role in antifungal immunity by mediating 'Lys-27'-linked ubiquitination of CARD9 downstream of C-type lectin receptors; leading to CARD9 activation, followed by activation of NF-kappa-B and MAP kinase p38 pathways (PubMed:26488816). E3 ubiquitin ligase activity is dependent on E2 ubiquitin-conjugating enzyme UBE2D2 (PubMed:23402750).</text>
</comment>
<comment type="catalytic activity">
    <reaction evidence="5 6">
        <text>S-ubiquitinyl-[E2 ubiquitin-conjugating enzyme]-L-cysteine + [acceptor protein]-L-lysine = [E2 ubiquitin-conjugating enzyme]-L-cysteine + N(6)-ubiquitinyl-[acceptor protein]-L-lysine.</text>
        <dbReference type="EC" id="2.3.2.27"/>
    </reaction>
</comment>
<comment type="pathway">
    <text evidence="5 6">Protein modification; protein ubiquitination.</text>
</comment>
<comment type="subunit">
    <text evidence="5">Interacts with the ubiquitin-conjugating enzyme, UBE2D2.</text>
</comment>
<comment type="interaction">
    <interactant intactId="EBI-6929619">
        <id>Q9BVG3</id>
    </interactant>
    <interactant intactId="EBI-769261">
        <id>Q96JC9</id>
        <label>EAF1</label>
    </interactant>
    <organismsDiffer>false</organismsDiffer>
    <experiments>3</experiments>
</comment>
<comment type="interaction">
    <interactant intactId="EBI-6929619">
        <id>Q9BVG3</id>
    </interactant>
    <interactant intactId="EBI-12135243">
        <id>O95208-2</id>
        <label>EPN2</label>
    </interactant>
    <organismsDiffer>false</organismsDiffer>
    <experiments>3</experiments>
</comment>
<comment type="interaction">
    <interactant intactId="EBI-6929619">
        <id>Q9BVG3</id>
    </interactant>
    <interactant intactId="EBI-371876">
        <id>Q9NQT4</id>
        <label>EXOSC5</label>
    </interactant>
    <organismsDiffer>false</organismsDiffer>
    <experiments>3</experiments>
</comment>
<comment type="interaction">
    <interactant intactId="EBI-6929619">
        <id>Q9BVG3</id>
    </interactant>
    <interactant intactId="EBI-12039347">
        <id>Q9NVQ4-2</id>
        <label>FAIM</label>
    </interactant>
    <organismsDiffer>false</organismsDiffer>
    <experiments>3</experiments>
</comment>
<comment type="interaction">
    <interactant intactId="EBI-6929619">
        <id>Q9BVG3</id>
    </interactant>
    <interactant intactId="EBI-3905236">
        <id>P35754</id>
        <label>GLRX</label>
    </interactant>
    <organismsDiffer>false</organismsDiffer>
    <experiments>5</experiments>
</comment>
<comment type="interaction">
    <interactant intactId="EBI-6929619">
        <id>Q9BVG3</id>
    </interactant>
    <interactant intactId="EBI-2557469">
        <id>Q6NYC8</id>
        <label>PPP1R18</label>
    </interactant>
    <organismsDiffer>false</organismsDiffer>
    <experiments>3</experiments>
</comment>
<comment type="interaction">
    <interactant intactId="EBI-6929619">
        <id>Q9BVG3</id>
    </interactant>
    <interactant intactId="EBI-10713842">
        <id>Q8TDD2</id>
        <label>SP7</label>
    </interactant>
    <organismsDiffer>false</organismsDiffer>
    <experiments>5</experiments>
</comment>
<comment type="interaction">
    <interactant intactId="EBI-6929619">
        <id>Q9BVG3</id>
    </interactant>
    <interactant intactId="EBI-3258000">
        <id>Q9P0N9</id>
        <label>TBC1D7</label>
    </interactant>
    <organismsDiffer>false</organismsDiffer>
    <experiments>3</experiments>
</comment>
<comment type="interaction">
    <interactant intactId="EBI-6929619">
        <id>Q9BVG3</id>
    </interactant>
    <interactant intactId="EBI-6929619">
        <id>Q9BVG3</id>
        <label>TRIM62</label>
    </interactant>
    <organismsDiffer>false</organismsDiffer>
    <experiments>5</experiments>
</comment>
<comment type="interaction">
    <interactant intactId="EBI-6929619">
        <id>Q9BVG3</id>
    </interactant>
    <interactant intactId="EBI-743540">
        <id>P51668</id>
        <label>UBE2D1</label>
    </interactant>
    <organismsDiffer>false</organismsDiffer>
    <experiments>3</experiments>
</comment>
<comment type="interaction">
    <interactant intactId="EBI-6929619">
        <id>Q9BVG3</id>
    </interactant>
    <interactant intactId="EBI-348268">
        <id>P61077</id>
        <label>UBE2D3</label>
    </interactant>
    <organismsDiffer>false</organismsDiffer>
    <experiments>3</experiments>
</comment>
<comment type="interaction">
    <interactant intactId="EBI-6929619">
        <id>Q9BVG3</id>
    </interactant>
    <interactant intactId="EBI-745527">
        <id>Q9Y2X8</id>
        <label>UBE2D4</label>
    </interactant>
    <organismsDiffer>false</organismsDiffer>
    <experiments>3</experiments>
</comment>
<comment type="interaction">
    <interactant intactId="EBI-6929619">
        <id>Q9BVG3</id>
    </interactant>
    <interactant intactId="EBI-348496">
        <id>Q969T4</id>
        <label>UBE2E3</label>
    </interactant>
    <organismsDiffer>false</organismsDiffer>
    <experiments>3</experiments>
</comment>
<comment type="interaction">
    <interactant intactId="EBI-6929619">
        <id>Q9BVG3</id>
    </interactant>
    <interactant intactId="EBI-2129974">
        <id>O14933</id>
        <label>UBE2L6</label>
    </interactant>
    <organismsDiffer>false</organismsDiffer>
    <experiments>3</experiments>
</comment>
<comment type="interaction">
    <interactant intactId="EBI-6929619">
        <id>Q9BVG3</id>
    </interactant>
    <interactant intactId="EBI-1993627">
        <id>O94888</id>
        <label>UBXN7</label>
    </interactant>
    <organismsDiffer>false</organismsDiffer>
    <experiments>3</experiments>
</comment>
<comment type="interaction">
    <interactant intactId="EBI-6929619">
        <id>Q9BVG3</id>
    </interactant>
    <interactant intactId="EBI-747711">
        <id>Q68CQ4</id>
        <label>UTP25</label>
    </interactant>
    <organismsDiffer>false</organismsDiffer>
    <experiments>3</experiments>
</comment>
<comment type="subcellular location">
    <subcellularLocation>
        <location evidence="5 6">Cytoplasm</location>
    </subcellularLocation>
</comment>
<comment type="alternative products">
    <event type="alternative splicing"/>
    <isoform>
        <id>Q9BVG3-1</id>
        <name>1</name>
        <sequence type="displayed"/>
    </isoform>
    <isoform>
        <id>Q9BVG3-2</id>
        <name>2</name>
        <sequence type="described" ref="VSP_055441 VSP_055442"/>
    </isoform>
</comment>
<comment type="domain">
    <text evidence="5">The RING finger is required for ubiquitin ligase activity.</text>
</comment>
<comment type="PTM">
    <text evidence="5">Polyubiquitinated, autoubiquitinated in the presence of UBE2D2.</text>
</comment>
<comment type="similarity">
    <text evidence="9">Belongs to the TRIM/RBCC family.</text>
</comment>
<name>TRI62_HUMAN</name>
<keyword id="KW-0025">Alternative splicing</keyword>
<keyword id="KW-0175">Coiled coil</keyword>
<keyword id="KW-0963">Cytoplasm</keyword>
<keyword id="KW-0391">Immunity</keyword>
<keyword id="KW-0399">Innate immunity</keyword>
<keyword id="KW-0479">Metal-binding</keyword>
<keyword id="KW-1267">Proteomics identification</keyword>
<keyword id="KW-1185">Reference proteome</keyword>
<keyword id="KW-0808">Transferase</keyword>
<keyword id="KW-0832">Ubl conjugation</keyword>
<keyword id="KW-0833">Ubl conjugation pathway</keyword>
<keyword id="KW-0862">Zinc</keyword>
<keyword id="KW-0863">Zinc-finger</keyword>